<proteinExistence type="evidence at protein level"/>
<accession>Q63796</accession>
<comment type="function">
    <text evidence="1">Part of a non-canonical MAPK signaling pathway. Activated by APOE, enhances the AP-1-mediated transcription of APP, via a MAP kinase signal transduction pathway composed of MAP2K7 and MAPK1/ERK2 and MAPK3/ERK1. May be an activator of the JNK/SAPK pathway.</text>
</comment>
<comment type="catalytic activity">
    <reaction evidence="2">
        <text>L-seryl-[protein] + ATP = O-phospho-L-seryl-[protein] + ADP + H(+)</text>
        <dbReference type="Rhea" id="RHEA:17989"/>
        <dbReference type="Rhea" id="RHEA-COMP:9863"/>
        <dbReference type="Rhea" id="RHEA-COMP:11604"/>
        <dbReference type="ChEBI" id="CHEBI:15378"/>
        <dbReference type="ChEBI" id="CHEBI:29999"/>
        <dbReference type="ChEBI" id="CHEBI:30616"/>
        <dbReference type="ChEBI" id="CHEBI:83421"/>
        <dbReference type="ChEBI" id="CHEBI:456216"/>
        <dbReference type="EC" id="2.7.11.25"/>
    </reaction>
</comment>
<comment type="catalytic activity">
    <reaction evidence="2">
        <text>L-threonyl-[protein] + ATP = O-phospho-L-threonyl-[protein] + ADP + H(+)</text>
        <dbReference type="Rhea" id="RHEA:46608"/>
        <dbReference type="Rhea" id="RHEA-COMP:11060"/>
        <dbReference type="Rhea" id="RHEA-COMP:11605"/>
        <dbReference type="ChEBI" id="CHEBI:15378"/>
        <dbReference type="ChEBI" id="CHEBI:30013"/>
        <dbReference type="ChEBI" id="CHEBI:30616"/>
        <dbReference type="ChEBI" id="CHEBI:61977"/>
        <dbReference type="ChEBI" id="CHEBI:456216"/>
        <dbReference type="EC" id="2.7.11.25"/>
    </reaction>
</comment>
<comment type="cofactor">
    <cofactor>
        <name>Mg(2+)</name>
        <dbReference type="ChEBI" id="CHEBI:18420"/>
    </cofactor>
</comment>
<comment type="subunit">
    <text evidence="1 2">Homodimer (By similarity). Interacts with MBIP (By similarity).</text>
</comment>
<comment type="subcellular location">
    <subcellularLocation>
        <location evidence="2">Cytoplasm</location>
    </subcellularLocation>
    <subcellularLocation>
        <location evidence="2">Cell membrane</location>
    </subcellularLocation>
    <text evidence="2">Behaves essentially as an integral membrane protein.</text>
</comment>
<comment type="domain">
    <text evidence="1">Interacts with MBIP through the leucine-zipper motif.</text>
</comment>
<comment type="PTM">
    <text evidence="2">Autophosphorylated on Ser/Thr. Phosphorylated in cytosol under basal conditions and dephosphorylated when membrane-associated (By similarity).</text>
</comment>
<comment type="PTM">
    <text evidence="1">The activity of MAP3K12 can be regulated through its proteasomal degradation. APOE, through a receptor-mediated mechanism, activates MAP3K12 by preventing its proteasomal degradation.</text>
</comment>
<comment type="similarity">
    <text evidence="6">Belongs to the protein kinase superfamily. STE Ser/Thr protein kinase family. MAP kinase kinase kinase subfamily.</text>
</comment>
<keyword id="KW-0067">ATP-binding</keyword>
<keyword id="KW-1003">Cell membrane</keyword>
<keyword id="KW-0963">Cytoplasm</keyword>
<keyword id="KW-0903">Direct protein sequencing</keyword>
<keyword id="KW-0418">Kinase</keyword>
<keyword id="KW-0460">Magnesium</keyword>
<keyword id="KW-0472">Membrane</keyword>
<keyword id="KW-0547">Nucleotide-binding</keyword>
<keyword id="KW-0597">Phosphoprotein</keyword>
<keyword id="KW-1185">Reference proteome</keyword>
<keyword id="KW-0677">Repeat</keyword>
<keyword id="KW-0723">Serine/threonine-protein kinase</keyword>
<keyword id="KW-0808">Transferase</keyword>
<gene>
    <name type="primary">Map3k12</name>
    <name type="synonym">Muk</name>
</gene>
<feature type="chain" id="PRO_0000086263" description="Mitogen-activated protein kinase kinase kinase 12">
    <location>
        <begin position="1"/>
        <end position="888"/>
    </location>
</feature>
<feature type="domain" description="Protein kinase" evidence="3">
    <location>
        <begin position="158"/>
        <end position="399"/>
    </location>
</feature>
<feature type="region of interest" description="Disordered" evidence="5">
    <location>
        <begin position="26"/>
        <end position="104"/>
    </location>
</feature>
<feature type="region of interest" description="Leucine-zipper 1">
    <location>
        <begin position="423"/>
        <end position="444"/>
    </location>
</feature>
<feature type="region of interest" description="Leucine-zipper 2">
    <location>
        <begin position="476"/>
        <end position="497"/>
    </location>
</feature>
<feature type="region of interest" description="Disordered" evidence="5">
    <location>
        <begin position="557"/>
        <end position="620"/>
    </location>
</feature>
<feature type="region of interest" description="Disordered" evidence="5">
    <location>
        <begin position="654"/>
        <end position="731"/>
    </location>
</feature>
<feature type="region of interest" description="Disordered" evidence="5">
    <location>
        <begin position="743"/>
        <end position="888"/>
    </location>
</feature>
<feature type="compositionally biased region" description="Basic and acidic residues" evidence="5">
    <location>
        <begin position="26"/>
        <end position="42"/>
    </location>
</feature>
<feature type="compositionally biased region" description="Pro residues" evidence="5">
    <location>
        <begin position="64"/>
        <end position="75"/>
    </location>
</feature>
<feature type="compositionally biased region" description="Basic residues" evidence="5">
    <location>
        <begin position="572"/>
        <end position="584"/>
    </location>
</feature>
<feature type="compositionally biased region" description="Gly residues" evidence="5">
    <location>
        <begin position="605"/>
        <end position="615"/>
    </location>
</feature>
<feature type="compositionally biased region" description="Gly residues" evidence="5">
    <location>
        <begin position="704"/>
        <end position="725"/>
    </location>
</feature>
<feature type="compositionally biased region" description="Acidic residues" evidence="5">
    <location>
        <begin position="752"/>
        <end position="763"/>
    </location>
</feature>
<feature type="compositionally biased region" description="Polar residues" evidence="5">
    <location>
        <begin position="776"/>
        <end position="789"/>
    </location>
</feature>
<feature type="compositionally biased region" description="Polar residues" evidence="5">
    <location>
        <begin position="798"/>
        <end position="812"/>
    </location>
</feature>
<feature type="compositionally biased region" description="Basic and acidic residues" evidence="5">
    <location>
        <begin position="813"/>
        <end position="823"/>
    </location>
</feature>
<feature type="active site" description="Proton acceptor" evidence="3 4">
    <location>
        <position position="269"/>
    </location>
</feature>
<feature type="binding site" evidence="3">
    <location>
        <begin position="164"/>
        <end position="172"/>
    </location>
    <ligand>
        <name>ATP</name>
        <dbReference type="ChEBI" id="CHEBI:30616"/>
    </ligand>
</feature>
<feature type="binding site" evidence="3">
    <location>
        <position position="185"/>
    </location>
    <ligand>
        <name>ATP</name>
        <dbReference type="ChEBI" id="CHEBI:30616"/>
    </ligand>
</feature>
<feature type="modified residue" description="Phosphothreonine" evidence="2">
    <location>
        <position position="37"/>
    </location>
</feature>
<feature type="modified residue" description="Phosphothreonine" evidence="2">
    <location>
        <position position="43"/>
    </location>
</feature>
<feature type="modified residue" description="Phosphoserine" evidence="2">
    <location>
        <position position="640"/>
    </location>
</feature>
<organism>
    <name type="scientific">Rattus norvegicus</name>
    <name type="common">Rat</name>
    <dbReference type="NCBI Taxonomy" id="10116"/>
    <lineage>
        <taxon>Eukaryota</taxon>
        <taxon>Metazoa</taxon>
        <taxon>Chordata</taxon>
        <taxon>Craniata</taxon>
        <taxon>Vertebrata</taxon>
        <taxon>Euteleostomi</taxon>
        <taxon>Mammalia</taxon>
        <taxon>Eutheria</taxon>
        <taxon>Euarchontoglires</taxon>
        <taxon>Glires</taxon>
        <taxon>Rodentia</taxon>
        <taxon>Myomorpha</taxon>
        <taxon>Muroidea</taxon>
        <taxon>Muridae</taxon>
        <taxon>Murinae</taxon>
        <taxon>Rattus</taxon>
    </lineage>
</organism>
<sequence length="888" mass="96308">MACLHETRTPSPSFGGFVSTLSEASMRKLDPDTSDCTPEKDLTPTQCVLRDVVPLGGQGGGGPSPSPGGEPPPEPFANSVLQLHEQDTGGPGGATGSPESRASRVRADEVRLQCQSGSGFLEGLFGCLRPVWTMIGKAYSTEHKQQQEDLWEVPFEEILDLQWVGSGAQGAVFLGRFHGEEVAVKKVRDLKETDIKHLRKLKHPNIITFKGVCTQAPCYCILMEFCAQGQLYEVLRAGRPVTPSLLVDWSMGIAGGMNYLHLHKIIHRDLKSPNMLITYDDVVKISDFGTSKELSDKSTKMSFAGTVAWMAPEVIRNEPVSEKVDIWSFGVVLWELLTGEIPYKDVDSSAIIWGVGSNSLHLPVPSSCPDGFKILLRQCWNRKPRNRPSFRQILLHLDIASADVLSTPQETYFKSQAEWREEVKLHFEKIKSEGTCLHRLEEELVMRRREELRHALDIREHYERKLERANNLYMELNALMLQLELKERELLRREQALERRCPGLLKSHTSRSLLHGNTMEKLIKKRNVPQKLSPHSKRPDILKTESLLPKLDAALSGVGLPGCPKAPPSPGRSRRGKTRHRKASAKGSCGDLPGLRAALPPHEPGGLGSPGGLGVGPTAWDASPPALRGLHHDLLLRKMSSSSPDLLSAALGARGRGATGGARDPGSPPPPQGDTPPSEGSAPGSTSPDSPGGAKGEPPPPVGPGEGVGLLGTGREGTTGRGGSRAGYQHLTPAALLYRAAVTRSQKRGISSEEEEGEVDSEVELPPSQRWPQGPNMRQSLSTFSSENPSDVEEGTASEPSPSGTPEVGSTNTDERPDERSDDMCSQGSEIPLDLPTSEVVPERETSSLPMQHQDDQGPNPEDSDCDSTELDNSNSIDALPPPASLPP</sequence>
<protein>
    <recommendedName>
        <fullName>Mitogen-activated protein kinase kinase kinase 12</fullName>
        <ecNumber evidence="2">2.7.11.25</ecNumber>
    </recommendedName>
    <alternativeName>
        <fullName>Dual leucine zipper bearing kinase</fullName>
        <shortName>DLK</shortName>
    </alternativeName>
    <alternativeName>
        <fullName>Leucine-zipper protein kinase</fullName>
        <shortName>ZPK</shortName>
    </alternativeName>
    <alternativeName>
        <fullName>MAPK-upstream kinase</fullName>
        <shortName>MUK</shortName>
    </alternativeName>
    <alternativeName>
        <fullName>Mixed lineage kinase</fullName>
    </alternativeName>
</protein>
<name>M3K12_RAT</name>
<reference key="1">
    <citation type="journal article" date="1996" name="Oncogene">
        <title>Activation of the JNK pathway by distantly related protein kinases, MEKK and MUK.</title>
        <authorList>
            <person name="Hirai S."/>
            <person name="Izawa M."/>
            <person name="Osada S."/>
            <person name="Spyrou G."/>
            <person name="Ohno S."/>
        </authorList>
    </citation>
    <scope>NUCLEOTIDE SEQUENCE [MRNA]</scope>
</reference>
<reference key="2">
    <citation type="submission" date="2007-07" db="UniProtKB">
        <authorList>
            <person name="Lubec G."/>
            <person name="Kang S.U."/>
        </authorList>
    </citation>
    <scope>PROTEIN SEQUENCE OF 440-448</scope>
    <scope>IDENTIFICATION BY MASS SPECTROMETRY</scope>
    <source>
        <strain>Sprague-Dawley</strain>
        <tissue>Brain</tissue>
    </source>
</reference>
<dbReference type="EC" id="2.7.11.25" evidence="2"/>
<dbReference type="EMBL" id="D49785">
    <property type="protein sequence ID" value="BAA08621.1"/>
    <property type="molecule type" value="mRNA"/>
</dbReference>
<dbReference type="PIR" id="JC5399">
    <property type="entry name" value="JC5399"/>
</dbReference>
<dbReference type="RefSeq" id="NP_037187.1">
    <property type="nucleotide sequence ID" value="NM_013055.1"/>
</dbReference>
<dbReference type="SMR" id="Q63796"/>
<dbReference type="FunCoup" id="Q63796">
    <property type="interactions" value="3475"/>
</dbReference>
<dbReference type="STRING" id="10116.ENSRNOP00000020437"/>
<dbReference type="GlyGen" id="Q63796">
    <property type="glycosylation" value="3 sites"/>
</dbReference>
<dbReference type="PhosphoSitePlus" id="Q63796"/>
<dbReference type="SwissPalm" id="Q63796"/>
<dbReference type="PaxDb" id="10116-ENSRNOP00000020437"/>
<dbReference type="ABCD" id="Q63796">
    <property type="antibodies" value="2 sequenced antibodies"/>
</dbReference>
<dbReference type="GeneID" id="25579"/>
<dbReference type="KEGG" id="rno:25579"/>
<dbReference type="UCSC" id="RGD:3988">
    <property type="organism name" value="rat"/>
</dbReference>
<dbReference type="AGR" id="RGD:3988"/>
<dbReference type="CTD" id="7786"/>
<dbReference type="RGD" id="3988">
    <property type="gene designation" value="Map3k12"/>
</dbReference>
<dbReference type="eggNOG" id="KOG4721">
    <property type="taxonomic scope" value="Eukaryota"/>
</dbReference>
<dbReference type="InParanoid" id="Q63796"/>
<dbReference type="PhylomeDB" id="Q63796"/>
<dbReference type="PRO" id="PR:Q63796"/>
<dbReference type="Proteomes" id="UP000002494">
    <property type="component" value="Unplaced"/>
</dbReference>
<dbReference type="GO" id="GO:0030424">
    <property type="term" value="C:axon"/>
    <property type="evidence" value="ECO:0000266"/>
    <property type="project" value="RGD"/>
</dbReference>
<dbReference type="GO" id="GO:0005737">
    <property type="term" value="C:cytoplasm"/>
    <property type="evidence" value="ECO:0000318"/>
    <property type="project" value="GO_Central"/>
</dbReference>
<dbReference type="GO" id="GO:0005829">
    <property type="term" value="C:cytosol"/>
    <property type="evidence" value="ECO:0000250"/>
    <property type="project" value="UniProtKB"/>
</dbReference>
<dbReference type="GO" id="GO:0030426">
    <property type="term" value="C:growth cone"/>
    <property type="evidence" value="ECO:0000266"/>
    <property type="project" value="RGD"/>
</dbReference>
<dbReference type="GO" id="GO:0005886">
    <property type="term" value="C:plasma membrane"/>
    <property type="evidence" value="ECO:0000250"/>
    <property type="project" value="UniProtKB"/>
</dbReference>
<dbReference type="GO" id="GO:0005524">
    <property type="term" value="F:ATP binding"/>
    <property type="evidence" value="ECO:0007669"/>
    <property type="project" value="UniProtKB-KW"/>
</dbReference>
<dbReference type="GO" id="GO:0004709">
    <property type="term" value="F:MAP kinase kinase kinase activity"/>
    <property type="evidence" value="ECO:0007669"/>
    <property type="project" value="UniProtKB-EC"/>
</dbReference>
<dbReference type="GO" id="GO:0042803">
    <property type="term" value="F:protein homodimerization activity"/>
    <property type="evidence" value="ECO:0000250"/>
    <property type="project" value="UniProtKB"/>
</dbReference>
<dbReference type="GO" id="GO:0019901">
    <property type="term" value="F:protein kinase binding"/>
    <property type="evidence" value="ECO:0000266"/>
    <property type="project" value="RGD"/>
</dbReference>
<dbReference type="GO" id="GO:0106310">
    <property type="term" value="F:protein serine kinase activity"/>
    <property type="evidence" value="ECO:0007669"/>
    <property type="project" value="RHEA"/>
</dbReference>
<dbReference type="GO" id="GO:0043539">
    <property type="term" value="F:protein serine/threonine kinase activator activity"/>
    <property type="evidence" value="ECO:0000266"/>
    <property type="project" value="RGD"/>
</dbReference>
<dbReference type="GO" id="GO:0004674">
    <property type="term" value="F:protein serine/threonine kinase activity"/>
    <property type="evidence" value="ECO:0000250"/>
    <property type="project" value="UniProtKB"/>
</dbReference>
<dbReference type="GO" id="GO:0007254">
    <property type="term" value="P:JNK cascade"/>
    <property type="evidence" value="ECO:0000266"/>
    <property type="project" value="RGD"/>
</dbReference>
<dbReference type="GO" id="GO:2000672">
    <property type="term" value="P:negative regulation of motor neuron apoptotic process"/>
    <property type="evidence" value="ECO:0000266"/>
    <property type="project" value="RGD"/>
</dbReference>
<dbReference type="GO" id="GO:0045893">
    <property type="term" value="P:positive regulation of DNA-templated transcription"/>
    <property type="evidence" value="ECO:0000250"/>
    <property type="project" value="UniProtKB"/>
</dbReference>
<dbReference type="GO" id="GO:0070374">
    <property type="term" value="P:positive regulation of ERK1 and ERK2 cascade"/>
    <property type="evidence" value="ECO:0000250"/>
    <property type="project" value="UniProtKB"/>
</dbReference>
<dbReference type="GO" id="GO:0043687">
    <property type="term" value="P:post-translational protein modification"/>
    <property type="evidence" value="ECO:0000250"/>
    <property type="project" value="UniProtKB"/>
</dbReference>
<dbReference type="GO" id="GO:0046777">
    <property type="term" value="P:protein autophosphorylation"/>
    <property type="evidence" value="ECO:0000250"/>
    <property type="project" value="UniProtKB"/>
</dbReference>
<dbReference type="CDD" id="cd14059">
    <property type="entry name" value="STKc_MAP3K12_13"/>
    <property type="match status" value="1"/>
</dbReference>
<dbReference type="FunFam" id="1.10.510.10:FF:000087">
    <property type="entry name" value="Mitogen-activated protein kinase kinase kinase 12"/>
    <property type="match status" value="1"/>
</dbReference>
<dbReference type="FunFam" id="3.30.200.20:FF:000095">
    <property type="entry name" value="Mitogen-activated protein kinase kinase kinase 12"/>
    <property type="match status" value="1"/>
</dbReference>
<dbReference type="Gene3D" id="3.30.200.20">
    <property type="entry name" value="Phosphorylase Kinase, domain 1"/>
    <property type="match status" value="1"/>
</dbReference>
<dbReference type="Gene3D" id="1.10.510.10">
    <property type="entry name" value="Transferase(Phosphotransferase) domain 1"/>
    <property type="match status" value="1"/>
</dbReference>
<dbReference type="InterPro" id="IPR011009">
    <property type="entry name" value="Kinase-like_dom_sf"/>
</dbReference>
<dbReference type="InterPro" id="IPR017419">
    <property type="entry name" value="MAP3K12_MAP3K13"/>
</dbReference>
<dbReference type="InterPro" id="IPR027257">
    <property type="entry name" value="MAPKKK12"/>
</dbReference>
<dbReference type="InterPro" id="IPR000719">
    <property type="entry name" value="Prot_kinase_dom"/>
</dbReference>
<dbReference type="InterPro" id="IPR001245">
    <property type="entry name" value="Ser-Thr/Tyr_kinase_cat_dom"/>
</dbReference>
<dbReference type="InterPro" id="IPR008271">
    <property type="entry name" value="Ser/Thr_kinase_AS"/>
</dbReference>
<dbReference type="InterPro" id="IPR051681">
    <property type="entry name" value="Ser/Thr_Kinases-Pseudokinases"/>
</dbReference>
<dbReference type="PANTHER" id="PTHR44329:SF17">
    <property type="entry name" value="MITOGEN-ACTIVATED PROTEIN KINASE KINASE KINASE 12"/>
    <property type="match status" value="1"/>
</dbReference>
<dbReference type="PANTHER" id="PTHR44329">
    <property type="entry name" value="SERINE/THREONINE-PROTEIN KINASE TNNI3K-RELATED"/>
    <property type="match status" value="1"/>
</dbReference>
<dbReference type="Pfam" id="PF07714">
    <property type="entry name" value="PK_Tyr_Ser-Thr"/>
    <property type="match status" value="1"/>
</dbReference>
<dbReference type="PIRSF" id="PIRSF500741">
    <property type="entry name" value="MAPKKK12"/>
    <property type="match status" value="1"/>
</dbReference>
<dbReference type="PIRSF" id="PIRSF038165">
    <property type="entry name" value="MAPKKK12_MAPKKK13"/>
    <property type="match status" value="1"/>
</dbReference>
<dbReference type="PRINTS" id="PR00109">
    <property type="entry name" value="TYRKINASE"/>
</dbReference>
<dbReference type="SMART" id="SM00220">
    <property type="entry name" value="S_TKc"/>
    <property type="match status" value="1"/>
</dbReference>
<dbReference type="SUPFAM" id="SSF56112">
    <property type="entry name" value="Protein kinase-like (PK-like)"/>
    <property type="match status" value="1"/>
</dbReference>
<dbReference type="PROSITE" id="PS50011">
    <property type="entry name" value="PROTEIN_KINASE_DOM"/>
    <property type="match status" value="1"/>
</dbReference>
<dbReference type="PROSITE" id="PS00108">
    <property type="entry name" value="PROTEIN_KINASE_ST"/>
    <property type="match status" value="1"/>
</dbReference>
<evidence type="ECO:0000250" key="1">
    <source>
        <dbReference type="UniProtKB" id="Q12852"/>
    </source>
</evidence>
<evidence type="ECO:0000250" key="2">
    <source>
        <dbReference type="UniProtKB" id="Q60700"/>
    </source>
</evidence>
<evidence type="ECO:0000255" key="3">
    <source>
        <dbReference type="PROSITE-ProRule" id="PRU00159"/>
    </source>
</evidence>
<evidence type="ECO:0000255" key="4">
    <source>
        <dbReference type="PROSITE-ProRule" id="PRU10027"/>
    </source>
</evidence>
<evidence type="ECO:0000256" key="5">
    <source>
        <dbReference type="SAM" id="MobiDB-lite"/>
    </source>
</evidence>
<evidence type="ECO:0000305" key="6"/>